<gene>
    <name evidence="1" type="primary">hemH</name>
    <name type="ordered locus">Oter_2470</name>
</gene>
<comment type="function">
    <text evidence="1">Catalyzes the ferrous insertion into protoporphyrin IX.</text>
</comment>
<comment type="catalytic activity">
    <reaction evidence="1">
        <text>heme b + 2 H(+) = protoporphyrin IX + Fe(2+)</text>
        <dbReference type="Rhea" id="RHEA:22584"/>
        <dbReference type="ChEBI" id="CHEBI:15378"/>
        <dbReference type="ChEBI" id="CHEBI:29033"/>
        <dbReference type="ChEBI" id="CHEBI:57306"/>
        <dbReference type="ChEBI" id="CHEBI:60344"/>
        <dbReference type="EC" id="4.98.1.1"/>
    </reaction>
</comment>
<comment type="pathway">
    <text evidence="1">Porphyrin-containing compound metabolism; protoheme biosynthesis; protoheme from protoporphyrin-IX: step 1/1.</text>
</comment>
<comment type="subcellular location">
    <subcellularLocation>
        <location evidence="1">Cytoplasm</location>
    </subcellularLocation>
</comment>
<comment type="similarity">
    <text evidence="1">Belongs to the ferrochelatase family.</text>
</comment>
<feature type="chain" id="PRO_1000116063" description="Ferrochelatase">
    <location>
        <begin position="1"/>
        <end position="345"/>
    </location>
</feature>
<feature type="binding site" evidence="1">
    <location>
        <position position="192"/>
    </location>
    <ligand>
        <name>Fe cation</name>
        <dbReference type="ChEBI" id="CHEBI:24875"/>
    </ligand>
</feature>
<feature type="binding site" evidence="1">
    <location>
        <position position="295"/>
    </location>
    <ligand>
        <name>Fe cation</name>
        <dbReference type="ChEBI" id="CHEBI:24875"/>
    </ligand>
</feature>
<evidence type="ECO:0000255" key="1">
    <source>
        <dbReference type="HAMAP-Rule" id="MF_00323"/>
    </source>
</evidence>
<name>HEMH_OPITP</name>
<sequence length="345" mass="38454">MPNRAVLLVNLGSPDSTSVPDVRRYLDEFLGDERVIDRPAQPFRSILVHRIIVPRRSPNSAHAYEQIWTKDGSPLIITSRNVQQKLAATLGPETPVYLAMRYGQPSIASVLGQIVADGVSELLLIPQYPHYAMSSWETVVVKVYEEAARQAPQLRVTTVQPFFDDADYIEALHAVSAPYFAQPHDYVLFSYHGIPVRHLCKADSSHAHCQIVNDCCNTPSPVHATCYRAQVFATTRALAARAGLAPDRHSVSFQSRLVGEPWLSPYTDHELERLAKAGIKRILVLCPAFLSDCLETLEEISVAGKETFVQAGGESFTQIPCLNDQPPFIDFLANRVRTWLQASHR</sequence>
<proteinExistence type="inferred from homology"/>
<protein>
    <recommendedName>
        <fullName evidence="1">Ferrochelatase</fullName>
        <ecNumber evidence="1">4.98.1.1</ecNumber>
    </recommendedName>
    <alternativeName>
        <fullName evidence="1">Heme synthase</fullName>
    </alternativeName>
    <alternativeName>
        <fullName evidence="1">Protoheme ferro-lyase</fullName>
    </alternativeName>
</protein>
<dbReference type="EC" id="4.98.1.1" evidence="1"/>
<dbReference type="EMBL" id="CP001032">
    <property type="protein sequence ID" value="ACB75752.1"/>
    <property type="molecule type" value="Genomic_DNA"/>
</dbReference>
<dbReference type="RefSeq" id="WP_012375287.1">
    <property type="nucleotide sequence ID" value="NC_010571.1"/>
</dbReference>
<dbReference type="SMR" id="B1ZSW3"/>
<dbReference type="STRING" id="452637.Oter_2470"/>
<dbReference type="KEGG" id="ote:Oter_2470"/>
<dbReference type="eggNOG" id="COG0276">
    <property type="taxonomic scope" value="Bacteria"/>
</dbReference>
<dbReference type="HOGENOM" id="CLU_018884_0_1_0"/>
<dbReference type="OrthoDB" id="9809741at2"/>
<dbReference type="UniPathway" id="UPA00252">
    <property type="reaction ID" value="UER00325"/>
</dbReference>
<dbReference type="Proteomes" id="UP000007013">
    <property type="component" value="Chromosome"/>
</dbReference>
<dbReference type="GO" id="GO:0005737">
    <property type="term" value="C:cytoplasm"/>
    <property type="evidence" value="ECO:0007669"/>
    <property type="project" value="UniProtKB-SubCell"/>
</dbReference>
<dbReference type="GO" id="GO:0004325">
    <property type="term" value="F:ferrochelatase activity"/>
    <property type="evidence" value="ECO:0007669"/>
    <property type="project" value="UniProtKB-UniRule"/>
</dbReference>
<dbReference type="GO" id="GO:0046872">
    <property type="term" value="F:metal ion binding"/>
    <property type="evidence" value="ECO:0007669"/>
    <property type="project" value="UniProtKB-KW"/>
</dbReference>
<dbReference type="GO" id="GO:0006783">
    <property type="term" value="P:heme biosynthetic process"/>
    <property type="evidence" value="ECO:0007669"/>
    <property type="project" value="UniProtKB-UniRule"/>
</dbReference>
<dbReference type="CDD" id="cd00419">
    <property type="entry name" value="Ferrochelatase_C"/>
    <property type="match status" value="1"/>
</dbReference>
<dbReference type="CDD" id="cd03411">
    <property type="entry name" value="Ferrochelatase_N"/>
    <property type="match status" value="1"/>
</dbReference>
<dbReference type="Gene3D" id="3.40.50.1400">
    <property type="match status" value="2"/>
</dbReference>
<dbReference type="HAMAP" id="MF_00323">
    <property type="entry name" value="Ferrochelatase"/>
    <property type="match status" value="1"/>
</dbReference>
<dbReference type="InterPro" id="IPR001015">
    <property type="entry name" value="Ferrochelatase"/>
</dbReference>
<dbReference type="InterPro" id="IPR033644">
    <property type="entry name" value="Ferrochelatase_C"/>
</dbReference>
<dbReference type="InterPro" id="IPR033659">
    <property type="entry name" value="Ferrochelatase_N"/>
</dbReference>
<dbReference type="NCBIfam" id="TIGR00109">
    <property type="entry name" value="hemH"/>
    <property type="match status" value="1"/>
</dbReference>
<dbReference type="PANTHER" id="PTHR11108">
    <property type="entry name" value="FERROCHELATASE"/>
    <property type="match status" value="1"/>
</dbReference>
<dbReference type="PANTHER" id="PTHR11108:SF1">
    <property type="entry name" value="FERROCHELATASE, MITOCHONDRIAL"/>
    <property type="match status" value="1"/>
</dbReference>
<dbReference type="Pfam" id="PF00762">
    <property type="entry name" value="Ferrochelatase"/>
    <property type="match status" value="1"/>
</dbReference>
<dbReference type="SUPFAM" id="SSF53800">
    <property type="entry name" value="Chelatase"/>
    <property type="match status" value="1"/>
</dbReference>
<keyword id="KW-0963">Cytoplasm</keyword>
<keyword id="KW-0350">Heme biosynthesis</keyword>
<keyword id="KW-0408">Iron</keyword>
<keyword id="KW-0456">Lyase</keyword>
<keyword id="KW-0479">Metal-binding</keyword>
<keyword id="KW-0627">Porphyrin biosynthesis</keyword>
<keyword id="KW-1185">Reference proteome</keyword>
<accession>B1ZSW3</accession>
<organism>
    <name type="scientific">Opitutus terrae (strain DSM 11246 / JCM 15787 / PB90-1)</name>
    <dbReference type="NCBI Taxonomy" id="452637"/>
    <lineage>
        <taxon>Bacteria</taxon>
        <taxon>Pseudomonadati</taxon>
        <taxon>Verrucomicrobiota</taxon>
        <taxon>Opitutia</taxon>
        <taxon>Opitutales</taxon>
        <taxon>Opitutaceae</taxon>
        <taxon>Opitutus</taxon>
    </lineage>
</organism>
<reference key="1">
    <citation type="journal article" date="2011" name="J. Bacteriol.">
        <title>Genome sequence of the verrucomicrobium Opitutus terrae PB90-1, an abundant inhabitant of rice paddy soil ecosystems.</title>
        <authorList>
            <person name="van Passel M.W."/>
            <person name="Kant R."/>
            <person name="Palva A."/>
            <person name="Copeland A."/>
            <person name="Lucas S."/>
            <person name="Lapidus A."/>
            <person name="Glavina del Rio T."/>
            <person name="Pitluck S."/>
            <person name="Goltsman E."/>
            <person name="Clum A."/>
            <person name="Sun H."/>
            <person name="Schmutz J."/>
            <person name="Larimer F.W."/>
            <person name="Land M.L."/>
            <person name="Hauser L."/>
            <person name="Kyrpides N."/>
            <person name="Mikhailova N."/>
            <person name="Richardson P.P."/>
            <person name="Janssen P.H."/>
            <person name="de Vos W.M."/>
            <person name="Smidt H."/>
        </authorList>
    </citation>
    <scope>NUCLEOTIDE SEQUENCE [LARGE SCALE GENOMIC DNA]</scope>
    <source>
        <strain>DSM 11246 / JCM 15787 / PB90-1</strain>
    </source>
</reference>